<keyword id="KW-0072">Autophagy</keyword>
<keyword id="KW-0256">Endoplasmic reticulum</keyword>
<keyword id="KW-0445">Lipid transport</keyword>
<keyword id="KW-0472">Membrane</keyword>
<keyword id="KW-0653">Protein transport</keyword>
<keyword id="KW-1185">Reference proteome</keyword>
<keyword id="KW-0813">Transport</keyword>
<feature type="chain" id="PRO_0000215834" description="Autophagy-related protein 2">
    <location>
        <begin position="1"/>
        <end position="2051"/>
    </location>
</feature>
<feature type="domain" description="Chorein N-terminal" evidence="3">
    <location>
        <begin position="31"/>
        <end position="121"/>
    </location>
</feature>
<feature type="region of interest" description="Disordered" evidence="4">
    <location>
        <begin position="108"/>
        <end position="129"/>
    </location>
</feature>
<feature type="region of interest" description="Disordered" evidence="4">
    <location>
        <begin position="152"/>
        <end position="179"/>
    </location>
</feature>
<feature type="region of interest" description="Disordered" evidence="4">
    <location>
        <begin position="297"/>
        <end position="331"/>
    </location>
</feature>
<feature type="region of interest" description="Disordered" evidence="4">
    <location>
        <begin position="363"/>
        <end position="384"/>
    </location>
</feature>
<feature type="region of interest" description="Disordered" evidence="4">
    <location>
        <begin position="419"/>
        <end position="466"/>
    </location>
</feature>
<feature type="region of interest" description="Disordered" evidence="4">
    <location>
        <begin position="501"/>
        <end position="564"/>
    </location>
</feature>
<feature type="compositionally biased region" description="Basic and acidic residues" evidence="4">
    <location>
        <begin position="108"/>
        <end position="117"/>
    </location>
</feature>
<feature type="compositionally biased region" description="Polar residues" evidence="4">
    <location>
        <begin position="374"/>
        <end position="383"/>
    </location>
</feature>
<feature type="compositionally biased region" description="Polar residues" evidence="4">
    <location>
        <begin position="426"/>
        <end position="435"/>
    </location>
</feature>
<feature type="compositionally biased region" description="Low complexity" evidence="4">
    <location>
        <begin position="436"/>
        <end position="454"/>
    </location>
</feature>
<protein>
    <recommendedName>
        <fullName>Autophagy-related protein 2</fullName>
    </recommendedName>
</protein>
<proteinExistence type="inferred from homology"/>
<name>ATG2_NEUCR</name>
<organism>
    <name type="scientific">Neurospora crassa (strain ATCC 24698 / 74-OR23-1A / CBS 708.71 / DSM 1257 / FGSC 987)</name>
    <dbReference type="NCBI Taxonomy" id="367110"/>
    <lineage>
        <taxon>Eukaryota</taxon>
        <taxon>Fungi</taxon>
        <taxon>Dikarya</taxon>
        <taxon>Ascomycota</taxon>
        <taxon>Pezizomycotina</taxon>
        <taxon>Sordariomycetes</taxon>
        <taxon>Sordariomycetidae</taxon>
        <taxon>Sordariales</taxon>
        <taxon>Sordariaceae</taxon>
        <taxon>Neurospora</taxon>
    </lineage>
</organism>
<comment type="function">
    <text evidence="2">Lipid transfer protein required for autophagosome completion and peroxisome degradation. Tethers the edge of the isolation membrane (IM) to the endoplasmic reticulum (ER) and mediates direct lipid transfer from ER to IM for IM expansion. Atg-2 binds to the ER exit site (ERES), which is the membrane source for autophagosome formation, using basic residues in its N-terminal region (NR) and to the expanding edge of the IM through its C-terminal region. The latter binding is assisted by an atg-18-PtdIns3P interaction. Atg-2 then extracts phospholipids from the membrane source using its NR and transfers them to atg-9 to the IM through its predicted beta-sheet-rich structure for membrane expansion.</text>
</comment>
<comment type="catalytic activity">
    <reaction evidence="1">
        <text>a 1,2-diacyl-sn-glycero-3-phosphocholine(in) = a 1,2-diacyl-sn-glycero-3-phosphocholine(out)</text>
        <dbReference type="Rhea" id="RHEA:38571"/>
        <dbReference type="ChEBI" id="CHEBI:57643"/>
    </reaction>
</comment>
<comment type="catalytic activity">
    <reaction evidence="1">
        <text>a 1,2-diacyl-sn-glycero-3-phospho-L-serine(in) = a 1,2-diacyl-sn-glycero-3-phospho-L-serine(out)</text>
        <dbReference type="Rhea" id="RHEA:38663"/>
        <dbReference type="ChEBI" id="CHEBI:57262"/>
    </reaction>
</comment>
<comment type="catalytic activity">
    <reaction evidence="1">
        <text>a 1,2-diacyl-sn-glycero-3-phosphoethanolamine(in) = a 1,2-diacyl-sn-glycero-3-phosphoethanolamine(out)</text>
        <dbReference type="Rhea" id="RHEA:38895"/>
        <dbReference type="ChEBI" id="CHEBI:64612"/>
    </reaction>
</comment>
<comment type="subcellular location">
    <subcellularLocation>
        <location evidence="2">Preautophagosomal structure membrane</location>
        <topology evidence="2">Peripheral membrane protein</topology>
    </subcellularLocation>
    <subcellularLocation>
        <location evidence="2">Endoplasmic reticulum membrane</location>
        <topology evidence="2">Peripheral membrane protein</topology>
    </subcellularLocation>
</comment>
<comment type="similarity">
    <text evidence="5">Belongs to the ATG2 family.</text>
</comment>
<comment type="sequence caution" evidence="5">
    <conflict type="erroneous gene model prediction">
        <sequence resource="EMBL-CDS" id="CAD70986"/>
    </conflict>
</comment>
<gene>
    <name type="primary">apg-2</name>
    <name type="synonym">atg2</name>
    <name type="ORF">20H10.030</name>
    <name type="ORF">NCU08926</name>
</gene>
<sequence>MSFFYRSFANSLLPKQLLRFILARLDLLDSQALDLDNLNFALGRNTVLEFRDVGLILSKLEALTNLPPTFKIQKAKVLLLRITIPVDIYNSPIIVEVEGVDTRIRVASKQEQDEQTAKNKKGTHKDGDEVVPTAADLAQSFLQTEIPTDEQRRLEKALAEEAQEALSESMSDSETDDDGSFATFGTGQGLSLPTFLTNFLQGILDRLQIRIHKVTFQLDMQVPVEPGLSTIELVTFQLALDEVIAEGVTAPGQQKDGSPAIVPREGKRHILLDNLRAFLITEANVFSSLLPTQSAQSLVKPQGPAPHDVPSTLRDMSGSMQSSVGGLDMSISPDQMEALDMLAQSQYEVRDSEDALNIPYESDTQYPEAEENVAGSSPLSTPRASMYQEHDTPMLQDHANSAIMQHQPELWSSYERGIRSEPSLHPPTSFQPQTMPSGAVSPAPSEPSSSASSVRSDDDTPSADTEDLAQSHLYSHEEAESMYMSAFSDAHSTLMPGAYMPGGWGAESEGGESASERDLSTTHPVAGEPQSSTPVVSELASPTPIPEQNPTAQGYEPQHEDTSTPRGITRMVKEIVSLDSISVYVPSTRKQVLAPVTNLAKSNPNLPGAFSVHQSFHSSTTDQSTLLTPENLKEDRQDYAIEIVLKPLTLRFDSSVGFLLAMVVTRLLEAFKGSSDEGAEVKPSSTESILPDIKVCLEQVTMQFLEELTGVADSAKRIYETQKPNFGSDVLLEASLTNLNAFTHQSGSQTEVNVSIEKFAFGYADEAIVSFTGEADLFQSTATVDMLSVGKDIAVKATITPDVTRVDVKTLPLYLKLDLQRLDETFSWFGGLSGFLNMGASEDSVAKAVQIPAKPPQKTRGVRFETPIDPMEKRSGSKIDVRINGVHVDVIGKDCRAVLNTSALKLVHREEAIAAVLKTIRLSGPYVRNSHARAPVVLELDSTRLDYILTPRTRDLERLLELITPSKVKFDEDEDEIMVDTLLRQRRKGGVLGLEVKNFKVRAGNLALLDCIPSLVDDLAKLGTVAKYLPEDDRPGLLTLGQVTNVDCEVDVGGRFGVVNARLTNLELAQITVPSLVAVAVGVVTVNRNENSPIEEELVSTSTAHAPGSSKAPVLMMRMIDDIEPVLKIKLFGLNVDYRVPTIMDVLGLIQEETTPEEFEANLAASVANLGGQATAALRRQDTPESPVVDKEFKPIKLDVAFRDCVVGLNPLGQDSKLAIVLADSHLEAIPGKDSTLDATATLKKACILLIDDVKTLQDVQINARGRAPAMSTPQALELCSKGFVSICEMSSAKAVVKVGKDENGESHVEVSVRDDLLVLETCADSTQTLISLANALTPPTPPSKEIKYRTSVLPVEDLFASITPDAFGRAEGEYDFDDDFAGAQGIECGNEDDDDYYGIGSTEHLEIQSEGYGVAEELFDATNSSLLGDIEVENTNDGMLVSTANLDVPPVSSQSESDLDIQENYFSSEPVKNTTLRWNSRKNLYDQSSDAQVFKSPLVICVRDVHVIWNLYDGYDWVRTREIITKAVQDVEAKAYERKARADRHTYEDEGDEESVVDDCLFNSIYIAVGPNGDPSNLRRAINQELQYQDTTTETESVATTAFTTSTVRASGHRQSRPRGKTLKLSRSKNHKITFELKGVNIDVVTFPPGNETINTIDVRIHDLDVFDHIRTSTWKKFAMYDIDAGERELSKHMVHLEVLNVKPVPDLPATELVVKVNILPLRLHVDQDALDFITRFFEFKDETQPIHQSSSDVPFIQRCEVGDVPVRLDFKPKRVDYAGLRSGHTTEFMNFVILEDSRLVLRHVILYGVSGFDKLGKKLNDIWTADVKSTQLPGVLAGVAPVRSLVNAGSGFKDLIEIPIREYKKDGRIFRSIGKGATAFAKTTGTEVVKLGAKLAIGTQYALQGAEGMLAKNPPNYNHAGPSSSSAGVPAGVDYEVWDEEDFGDHHTPKAISLYADQPLGIMQGMRGAYASLSRDIAIARDAIIAVPTEVMESSSAQGAAKAVLMQAPTILFRPAIGVSKAIGQTLLGATNALDPNHRKRIEAKYKKH</sequence>
<accession>Q871L5</accession>
<accession>Q7S752</accession>
<dbReference type="EMBL" id="BX294024">
    <property type="protein sequence ID" value="CAD70986.1"/>
    <property type="status" value="ALT_SEQ"/>
    <property type="molecule type" value="Genomic_DNA"/>
</dbReference>
<dbReference type="EMBL" id="CM002240">
    <property type="protein sequence ID" value="EAA31372.2"/>
    <property type="molecule type" value="Genomic_DNA"/>
</dbReference>
<dbReference type="RefSeq" id="XP_960608.2">
    <property type="nucleotide sequence ID" value="XM_955515.3"/>
</dbReference>
<dbReference type="STRING" id="367110.Q871L5"/>
<dbReference type="PaxDb" id="5141-EFNCRP00000008074"/>
<dbReference type="EnsemblFungi" id="EAA31372">
    <property type="protein sequence ID" value="EAA31372"/>
    <property type="gene ID" value="NCU08926"/>
</dbReference>
<dbReference type="GeneID" id="3876755"/>
<dbReference type="KEGG" id="ncr:NCU08926"/>
<dbReference type="VEuPathDB" id="FungiDB:NCU08926"/>
<dbReference type="HOGENOM" id="CLU_000626_1_0_1"/>
<dbReference type="InParanoid" id="Q871L5"/>
<dbReference type="OMA" id="AVWKRAP"/>
<dbReference type="OrthoDB" id="18982at2759"/>
<dbReference type="Proteomes" id="UP000001805">
    <property type="component" value="Chromosome 2, Linkage Group V"/>
</dbReference>
<dbReference type="GO" id="GO:0005789">
    <property type="term" value="C:endoplasmic reticulum membrane"/>
    <property type="evidence" value="ECO:0007669"/>
    <property type="project" value="UniProtKB-SubCell"/>
</dbReference>
<dbReference type="GO" id="GO:0061908">
    <property type="term" value="C:phagophore"/>
    <property type="evidence" value="ECO:0000318"/>
    <property type="project" value="GO_Central"/>
</dbReference>
<dbReference type="GO" id="GO:0000407">
    <property type="term" value="C:phagophore assembly site"/>
    <property type="evidence" value="ECO:0000318"/>
    <property type="project" value="GO_Central"/>
</dbReference>
<dbReference type="GO" id="GO:0034045">
    <property type="term" value="C:phagophore assembly site membrane"/>
    <property type="evidence" value="ECO:0007669"/>
    <property type="project" value="UniProtKB-SubCell"/>
</dbReference>
<dbReference type="GO" id="GO:0032266">
    <property type="term" value="F:phosphatidylinositol-3-phosphate binding"/>
    <property type="evidence" value="ECO:0000318"/>
    <property type="project" value="GO_Central"/>
</dbReference>
<dbReference type="GO" id="GO:0043495">
    <property type="term" value="F:protein-membrane adaptor activity"/>
    <property type="evidence" value="ECO:0000318"/>
    <property type="project" value="GO_Central"/>
</dbReference>
<dbReference type="GO" id="GO:0000045">
    <property type="term" value="P:autophagosome assembly"/>
    <property type="evidence" value="ECO:0000318"/>
    <property type="project" value="GO_Central"/>
</dbReference>
<dbReference type="GO" id="GO:0000422">
    <property type="term" value="P:autophagy of mitochondrion"/>
    <property type="evidence" value="ECO:0000318"/>
    <property type="project" value="GO_Central"/>
</dbReference>
<dbReference type="GO" id="GO:0061723">
    <property type="term" value="P:glycophagy"/>
    <property type="evidence" value="ECO:0000318"/>
    <property type="project" value="GO_Central"/>
</dbReference>
<dbReference type="GO" id="GO:0006869">
    <property type="term" value="P:lipid transport"/>
    <property type="evidence" value="ECO:0007669"/>
    <property type="project" value="UniProtKB-KW"/>
</dbReference>
<dbReference type="GO" id="GO:0000425">
    <property type="term" value="P:pexophagy"/>
    <property type="evidence" value="ECO:0000318"/>
    <property type="project" value="GO_Central"/>
</dbReference>
<dbReference type="GO" id="GO:0034727">
    <property type="term" value="P:piecemeal microautophagy of the nucleus"/>
    <property type="evidence" value="ECO:0000318"/>
    <property type="project" value="GO_Central"/>
</dbReference>
<dbReference type="GO" id="GO:0015031">
    <property type="term" value="P:protein transport"/>
    <property type="evidence" value="ECO:0007669"/>
    <property type="project" value="UniProtKB-KW"/>
</dbReference>
<dbReference type="GO" id="GO:0061709">
    <property type="term" value="P:reticulophagy"/>
    <property type="evidence" value="ECO:0000318"/>
    <property type="project" value="GO_Central"/>
</dbReference>
<dbReference type="InterPro" id="IPR026849">
    <property type="entry name" value="ATG2"/>
</dbReference>
<dbReference type="PANTHER" id="PTHR13190">
    <property type="entry name" value="AUTOPHAGY-RELATED 2, ISOFORM A"/>
    <property type="match status" value="1"/>
</dbReference>
<dbReference type="PANTHER" id="PTHR13190:SF1">
    <property type="entry name" value="AUTOPHAGY-RELATED 2, ISOFORM A"/>
    <property type="match status" value="1"/>
</dbReference>
<dbReference type="Pfam" id="PF13329">
    <property type="entry name" value="ATG2_CAD"/>
    <property type="match status" value="1"/>
</dbReference>
<reference key="1">
    <citation type="journal article" date="2003" name="Nucleic Acids Res.">
        <title>What's in the genome of a filamentous fungus? Analysis of the Neurospora genome sequence.</title>
        <authorList>
            <person name="Mannhaupt G."/>
            <person name="Montrone C."/>
            <person name="Haase D."/>
            <person name="Mewes H.-W."/>
            <person name="Aign V."/>
            <person name="Hoheisel J.D."/>
            <person name="Fartmann B."/>
            <person name="Nyakatura G."/>
            <person name="Kempken F."/>
            <person name="Maier J."/>
            <person name="Schulte U."/>
        </authorList>
    </citation>
    <scope>NUCLEOTIDE SEQUENCE [LARGE SCALE GENOMIC DNA]</scope>
    <source>
        <strain>ATCC 24698 / 74-OR23-1A / CBS 708.71 / DSM 1257 / FGSC 987</strain>
    </source>
</reference>
<reference key="2">
    <citation type="journal article" date="2003" name="Nature">
        <title>The genome sequence of the filamentous fungus Neurospora crassa.</title>
        <authorList>
            <person name="Galagan J.E."/>
            <person name="Calvo S.E."/>
            <person name="Borkovich K.A."/>
            <person name="Selker E.U."/>
            <person name="Read N.D."/>
            <person name="Jaffe D.B."/>
            <person name="FitzHugh W."/>
            <person name="Ma L.-J."/>
            <person name="Smirnov S."/>
            <person name="Purcell S."/>
            <person name="Rehman B."/>
            <person name="Elkins T."/>
            <person name="Engels R."/>
            <person name="Wang S."/>
            <person name="Nielsen C.B."/>
            <person name="Butler J."/>
            <person name="Endrizzi M."/>
            <person name="Qui D."/>
            <person name="Ianakiev P."/>
            <person name="Bell-Pedersen D."/>
            <person name="Nelson M.A."/>
            <person name="Werner-Washburne M."/>
            <person name="Selitrennikoff C.P."/>
            <person name="Kinsey J.A."/>
            <person name="Braun E.L."/>
            <person name="Zelter A."/>
            <person name="Schulte U."/>
            <person name="Kothe G.O."/>
            <person name="Jedd G."/>
            <person name="Mewes H.-W."/>
            <person name="Staben C."/>
            <person name="Marcotte E."/>
            <person name="Greenberg D."/>
            <person name="Roy A."/>
            <person name="Foley K."/>
            <person name="Naylor J."/>
            <person name="Stange-Thomann N."/>
            <person name="Barrett R."/>
            <person name="Gnerre S."/>
            <person name="Kamal M."/>
            <person name="Kamvysselis M."/>
            <person name="Mauceli E.W."/>
            <person name="Bielke C."/>
            <person name="Rudd S."/>
            <person name="Frishman D."/>
            <person name="Krystofova S."/>
            <person name="Rasmussen C."/>
            <person name="Metzenberg R.L."/>
            <person name="Perkins D.D."/>
            <person name="Kroken S."/>
            <person name="Cogoni C."/>
            <person name="Macino G."/>
            <person name="Catcheside D.E.A."/>
            <person name="Li W."/>
            <person name="Pratt R.J."/>
            <person name="Osmani S.A."/>
            <person name="DeSouza C.P.C."/>
            <person name="Glass N.L."/>
            <person name="Orbach M.J."/>
            <person name="Berglund J.A."/>
            <person name="Voelker R."/>
            <person name="Yarden O."/>
            <person name="Plamann M."/>
            <person name="Seiler S."/>
            <person name="Dunlap J.C."/>
            <person name="Radford A."/>
            <person name="Aramayo R."/>
            <person name="Natvig D.O."/>
            <person name="Alex L.A."/>
            <person name="Mannhaupt G."/>
            <person name="Ebbole D.J."/>
            <person name="Freitag M."/>
            <person name="Paulsen I."/>
            <person name="Sachs M.S."/>
            <person name="Lander E.S."/>
            <person name="Nusbaum C."/>
            <person name="Birren B.W."/>
        </authorList>
    </citation>
    <scope>NUCLEOTIDE SEQUENCE [LARGE SCALE GENOMIC DNA]</scope>
    <source>
        <strain>ATCC 24698 / 74-OR23-1A / CBS 708.71 / DSM 1257 / FGSC 987</strain>
    </source>
</reference>
<evidence type="ECO:0000250" key="1">
    <source>
        <dbReference type="UniProtKB" id="O94649"/>
    </source>
</evidence>
<evidence type="ECO:0000250" key="2">
    <source>
        <dbReference type="UniProtKB" id="P53855"/>
    </source>
</evidence>
<evidence type="ECO:0000255" key="3"/>
<evidence type="ECO:0000256" key="4">
    <source>
        <dbReference type="SAM" id="MobiDB-lite"/>
    </source>
</evidence>
<evidence type="ECO:0000305" key="5"/>